<organism>
    <name type="scientific">Rhizobium rhizogenes (strain K84 / ATCC BAA-868)</name>
    <name type="common">Agrobacterium radiobacter</name>
    <dbReference type="NCBI Taxonomy" id="311403"/>
    <lineage>
        <taxon>Bacteria</taxon>
        <taxon>Pseudomonadati</taxon>
        <taxon>Pseudomonadota</taxon>
        <taxon>Alphaproteobacteria</taxon>
        <taxon>Hyphomicrobiales</taxon>
        <taxon>Rhizobiaceae</taxon>
        <taxon>Rhizobium/Agrobacterium group</taxon>
        <taxon>Rhizobium</taxon>
    </lineage>
</organism>
<proteinExistence type="inferred from homology"/>
<gene>
    <name evidence="1" type="primary">bioB</name>
    <name type="ordered locus">Arad_3690</name>
</gene>
<dbReference type="EC" id="2.8.1.6" evidence="1"/>
<dbReference type="EMBL" id="CP000628">
    <property type="protein sequence ID" value="ACM27587.1"/>
    <property type="status" value="ALT_INIT"/>
    <property type="molecule type" value="Genomic_DNA"/>
</dbReference>
<dbReference type="SMR" id="B9J9I5"/>
<dbReference type="STRING" id="311403.Arad_3690"/>
<dbReference type="KEGG" id="ara:Arad_3690"/>
<dbReference type="eggNOG" id="COG0502">
    <property type="taxonomic scope" value="Bacteria"/>
</dbReference>
<dbReference type="HOGENOM" id="CLU_033172_1_2_5"/>
<dbReference type="UniPathway" id="UPA00078">
    <property type="reaction ID" value="UER00162"/>
</dbReference>
<dbReference type="Proteomes" id="UP000001600">
    <property type="component" value="Chromosome 1"/>
</dbReference>
<dbReference type="GO" id="GO:0051537">
    <property type="term" value="F:2 iron, 2 sulfur cluster binding"/>
    <property type="evidence" value="ECO:0007669"/>
    <property type="project" value="UniProtKB-KW"/>
</dbReference>
<dbReference type="GO" id="GO:0051539">
    <property type="term" value="F:4 iron, 4 sulfur cluster binding"/>
    <property type="evidence" value="ECO:0007669"/>
    <property type="project" value="UniProtKB-KW"/>
</dbReference>
<dbReference type="GO" id="GO:0004076">
    <property type="term" value="F:biotin synthase activity"/>
    <property type="evidence" value="ECO:0007669"/>
    <property type="project" value="UniProtKB-UniRule"/>
</dbReference>
<dbReference type="GO" id="GO:0005506">
    <property type="term" value="F:iron ion binding"/>
    <property type="evidence" value="ECO:0007669"/>
    <property type="project" value="UniProtKB-UniRule"/>
</dbReference>
<dbReference type="GO" id="GO:0009102">
    <property type="term" value="P:biotin biosynthetic process"/>
    <property type="evidence" value="ECO:0007669"/>
    <property type="project" value="UniProtKB-UniRule"/>
</dbReference>
<dbReference type="CDD" id="cd01335">
    <property type="entry name" value="Radical_SAM"/>
    <property type="match status" value="1"/>
</dbReference>
<dbReference type="Gene3D" id="3.20.20.70">
    <property type="entry name" value="Aldolase class I"/>
    <property type="match status" value="1"/>
</dbReference>
<dbReference type="HAMAP" id="MF_01694">
    <property type="entry name" value="BioB"/>
    <property type="match status" value="1"/>
</dbReference>
<dbReference type="InterPro" id="IPR013785">
    <property type="entry name" value="Aldolase_TIM"/>
</dbReference>
<dbReference type="InterPro" id="IPR010722">
    <property type="entry name" value="BATS_dom"/>
</dbReference>
<dbReference type="InterPro" id="IPR002684">
    <property type="entry name" value="Biotin_synth/BioAB"/>
</dbReference>
<dbReference type="InterPro" id="IPR024177">
    <property type="entry name" value="Biotin_synthase"/>
</dbReference>
<dbReference type="InterPro" id="IPR006638">
    <property type="entry name" value="Elp3/MiaA/NifB-like_rSAM"/>
</dbReference>
<dbReference type="InterPro" id="IPR007197">
    <property type="entry name" value="rSAM"/>
</dbReference>
<dbReference type="NCBIfam" id="TIGR00433">
    <property type="entry name" value="bioB"/>
    <property type="match status" value="1"/>
</dbReference>
<dbReference type="PANTHER" id="PTHR22976">
    <property type="entry name" value="BIOTIN SYNTHASE"/>
    <property type="match status" value="1"/>
</dbReference>
<dbReference type="PANTHER" id="PTHR22976:SF2">
    <property type="entry name" value="BIOTIN SYNTHASE, MITOCHONDRIAL"/>
    <property type="match status" value="1"/>
</dbReference>
<dbReference type="Pfam" id="PF06968">
    <property type="entry name" value="BATS"/>
    <property type="match status" value="1"/>
</dbReference>
<dbReference type="Pfam" id="PF04055">
    <property type="entry name" value="Radical_SAM"/>
    <property type="match status" value="1"/>
</dbReference>
<dbReference type="PIRSF" id="PIRSF001619">
    <property type="entry name" value="Biotin_synth"/>
    <property type="match status" value="1"/>
</dbReference>
<dbReference type="SFLD" id="SFLDF00272">
    <property type="entry name" value="biotin_synthase"/>
    <property type="match status" value="1"/>
</dbReference>
<dbReference type="SFLD" id="SFLDG01278">
    <property type="entry name" value="biotin_synthase_like"/>
    <property type="match status" value="1"/>
</dbReference>
<dbReference type="SMART" id="SM00876">
    <property type="entry name" value="BATS"/>
    <property type="match status" value="1"/>
</dbReference>
<dbReference type="SMART" id="SM00729">
    <property type="entry name" value="Elp3"/>
    <property type="match status" value="1"/>
</dbReference>
<dbReference type="SUPFAM" id="SSF102114">
    <property type="entry name" value="Radical SAM enzymes"/>
    <property type="match status" value="1"/>
</dbReference>
<dbReference type="PROSITE" id="PS51918">
    <property type="entry name" value="RADICAL_SAM"/>
    <property type="match status" value="1"/>
</dbReference>
<protein>
    <recommendedName>
        <fullName evidence="1">Biotin synthase</fullName>
        <ecNumber evidence="1">2.8.1.6</ecNumber>
    </recommendedName>
</protein>
<sequence>MAADGTIRHDWAIDEIVALHNLPLLELVGRANAVHRMHHDPNKVQKASLLSIKTGGCPENCAYCPQSAHHREVDLTRDRLMDPESVVAMAATARAAGAERFCMGAAWRQVRDGREFDAVIEMVKGVRALGMEACVTLGMLKPHQAERLAAAGLTAYNHNLDTSPEFYGQIITTRTYQDRLDTLATVRSFGIDLCCGGIIGMGETIRDRASMLHILAAMEPHPESVPINALVPVEGTPLAKRPVIAPLELVRMVATARLVMPASTVRLSAGRSNLNREAQILCLVAGANSVFYGDTLLTTPNAGIGEDAELFAAIGELDCDHVSASAA</sequence>
<comment type="function">
    <text evidence="1">Catalyzes the conversion of dethiobiotin (DTB) to biotin by the insertion of a sulfur atom into dethiobiotin via a radical-based mechanism.</text>
</comment>
<comment type="catalytic activity">
    <reaction evidence="1">
        <text>(4R,5S)-dethiobiotin + (sulfur carrier)-SH + 2 reduced [2Fe-2S]-[ferredoxin] + 2 S-adenosyl-L-methionine = (sulfur carrier)-H + biotin + 2 5'-deoxyadenosine + 2 L-methionine + 2 oxidized [2Fe-2S]-[ferredoxin]</text>
        <dbReference type="Rhea" id="RHEA:22060"/>
        <dbReference type="Rhea" id="RHEA-COMP:10000"/>
        <dbReference type="Rhea" id="RHEA-COMP:10001"/>
        <dbReference type="Rhea" id="RHEA-COMP:14737"/>
        <dbReference type="Rhea" id="RHEA-COMP:14739"/>
        <dbReference type="ChEBI" id="CHEBI:17319"/>
        <dbReference type="ChEBI" id="CHEBI:29917"/>
        <dbReference type="ChEBI" id="CHEBI:33737"/>
        <dbReference type="ChEBI" id="CHEBI:33738"/>
        <dbReference type="ChEBI" id="CHEBI:57586"/>
        <dbReference type="ChEBI" id="CHEBI:57844"/>
        <dbReference type="ChEBI" id="CHEBI:59789"/>
        <dbReference type="ChEBI" id="CHEBI:64428"/>
        <dbReference type="ChEBI" id="CHEBI:149473"/>
        <dbReference type="EC" id="2.8.1.6"/>
    </reaction>
</comment>
<comment type="cofactor">
    <cofactor evidence="1">
        <name>[4Fe-4S] cluster</name>
        <dbReference type="ChEBI" id="CHEBI:49883"/>
    </cofactor>
    <text evidence="1">Binds 1 [4Fe-4S] cluster. The cluster is coordinated with 3 cysteines and an exchangeable S-adenosyl-L-methionine.</text>
</comment>
<comment type="cofactor">
    <cofactor evidence="1">
        <name>[2Fe-2S] cluster</name>
        <dbReference type="ChEBI" id="CHEBI:190135"/>
    </cofactor>
    <text evidence="1">Binds 1 [2Fe-2S] cluster. The cluster is coordinated with 3 cysteines and 1 arginine.</text>
</comment>
<comment type="pathway">
    <text evidence="1">Cofactor biosynthesis; biotin biosynthesis; biotin from 7,8-diaminononanoate: step 2/2.</text>
</comment>
<comment type="subunit">
    <text evidence="1">Homodimer.</text>
</comment>
<comment type="similarity">
    <text evidence="1">Belongs to the radical SAM superfamily. Biotin synthase family.</text>
</comment>
<comment type="sequence caution" evidence="3">
    <conflict type="erroneous initiation">
        <sequence resource="EMBL-CDS" id="ACM27587"/>
    </conflict>
</comment>
<accession>B9J9I5</accession>
<name>BIOB_RHIR8</name>
<feature type="chain" id="PRO_0000381186" description="Biotin synthase">
    <location>
        <begin position="1"/>
        <end position="327"/>
    </location>
</feature>
<feature type="domain" description="Radical SAM core" evidence="2">
    <location>
        <begin position="42"/>
        <end position="268"/>
    </location>
</feature>
<feature type="binding site" evidence="1">
    <location>
        <position position="57"/>
    </location>
    <ligand>
        <name>[4Fe-4S] cluster</name>
        <dbReference type="ChEBI" id="CHEBI:49883"/>
        <note>4Fe-4S-S-AdoMet</note>
    </ligand>
</feature>
<feature type="binding site" evidence="1">
    <location>
        <position position="61"/>
    </location>
    <ligand>
        <name>[4Fe-4S] cluster</name>
        <dbReference type="ChEBI" id="CHEBI:49883"/>
        <note>4Fe-4S-S-AdoMet</note>
    </ligand>
</feature>
<feature type="binding site" evidence="1">
    <location>
        <position position="64"/>
    </location>
    <ligand>
        <name>[4Fe-4S] cluster</name>
        <dbReference type="ChEBI" id="CHEBI:49883"/>
        <note>4Fe-4S-S-AdoMet</note>
    </ligand>
</feature>
<feature type="binding site" evidence="1">
    <location>
        <position position="102"/>
    </location>
    <ligand>
        <name>[2Fe-2S] cluster</name>
        <dbReference type="ChEBI" id="CHEBI:190135"/>
    </ligand>
</feature>
<feature type="binding site" evidence="1">
    <location>
        <position position="134"/>
    </location>
    <ligand>
        <name>[2Fe-2S] cluster</name>
        <dbReference type="ChEBI" id="CHEBI:190135"/>
    </ligand>
</feature>
<feature type="binding site" evidence="1">
    <location>
        <position position="194"/>
    </location>
    <ligand>
        <name>[2Fe-2S] cluster</name>
        <dbReference type="ChEBI" id="CHEBI:190135"/>
    </ligand>
</feature>
<feature type="binding site" evidence="1">
    <location>
        <position position="266"/>
    </location>
    <ligand>
        <name>[2Fe-2S] cluster</name>
        <dbReference type="ChEBI" id="CHEBI:190135"/>
    </ligand>
</feature>
<reference key="1">
    <citation type="journal article" date="2009" name="J. Bacteriol.">
        <title>Genome sequences of three Agrobacterium biovars help elucidate the evolution of multichromosome genomes in bacteria.</title>
        <authorList>
            <person name="Slater S.C."/>
            <person name="Goldman B.S."/>
            <person name="Goodner B."/>
            <person name="Setubal J.C."/>
            <person name="Farrand S.K."/>
            <person name="Nester E.W."/>
            <person name="Burr T.J."/>
            <person name="Banta L."/>
            <person name="Dickerman A.W."/>
            <person name="Paulsen I."/>
            <person name="Otten L."/>
            <person name="Suen G."/>
            <person name="Welch R."/>
            <person name="Almeida N.F."/>
            <person name="Arnold F."/>
            <person name="Burton O.T."/>
            <person name="Du Z."/>
            <person name="Ewing A."/>
            <person name="Godsy E."/>
            <person name="Heisel S."/>
            <person name="Houmiel K.L."/>
            <person name="Jhaveri J."/>
            <person name="Lu J."/>
            <person name="Miller N.M."/>
            <person name="Norton S."/>
            <person name="Chen Q."/>
            <person name="Phoolcharoen W."/>
            <person name="Ohlin V."/>
            <person name="Ondrusek D."/>
            <person name="Pride N."/>
            <person name="Stricklin S.L."/>
            <person name="Sun J."/>
            <person name="Wheeler C."/>
            <person name="Wilson L."/>
            <person name="Zhu H."/>
            <person name="Wood D.W."/>
        </authorList>
    </citation>
    <scope>NUCLEOTIDE SEQUENCE [LARGE SCALE GENOMIC DNA]</scope>
    <source>
        <strain>K84 / ATCC BAA-868</strain>
    </source>
</reference>
<keyword id="KW-0001">2Fe-2S</keyword>
<keyword id="KW-0004">4Fe-4S</keyword>
<keyword id="KW-0093">Biotin biosynthesis</keyword>
<keyword id="KW-0408">Iron</keyword>
<keyword id="KW-0411">Iron-sulfur</keyword>
<keyword id="KW-0479">Metal-binding</keyword>
<keyword id="KW-0949">S-adenosyl-L-methionine</keyword>
<keyword id="KW-0808">Transferase</keyword>
<evidence type="ECO:0000255" key="1">
    <source>
        <dbReference type="HAMAP-Rule" id="MF_01694"/>
    </source>
</evidence>
<evidence type="ECO:0000255" key="2">
    <source>
        <dbReference type="PROSITE-ProRule" id="PRU01266"/>
    </source>
</evidence>
<evidence type="ECO:0000305" key="3"/>